<protein>
    <recommendedName>
        <fullName evidence="1">Glutamate--tRNA ligase</fullName>
        <ecNumber evidence="1">6.1.1.17</ecNumber>
    </recommendedName>
    <alternativeName>
        <fullName evidence="1">Glutamyl-tRNA synthetase</fullName>
        <shortName evidence="1">GluRS</shortName>
    </alternativeName>
</protein>
<gene>
    <name evidence="1" type="primary">gltX</name>
    <name type="ordered locus">mhp241</name>
</gene>
<sequence length="467" mass="55282">MKIRTRYAPSPTGFLHIGGARTALFNYLFAKHHNGDFILRIEDSDNSRNIKDGEKSQIENLLWLGIIPDEKPGSETKFGPYRQSEKLERYQKLAQELIKKGFAYYAFDNQEELELQKKEQIAKGIFSFRYDQNWLKISDQEKQKRLKNKHFVIRFKVDKAKNFCWNDLVRGQICFEGSAISDWVIIKSDGFPTYNFAVVVDDFDMEISHIFRGEEHISNTPKQIGIYQAFNWKTPKFGHLTIITDKNGKKLSKRDKSLFQFIEDYKNQGYHSEAFFNFLALLGWTSPDSQEFFDHKSLIKAFDYKRLSKAPSYFDIEKLNWFSKSYISKMPVDKILENLELSDNQIWNQFFVETFQKSSIKYADFYKNFEFFHRPKQEMDEKMLEIFEKLDKKPVKIFASKIDYQNWDYTKINDLIKEIGQKLEITGKNLLLPIRLATTFTNSGPELARAIWLLGKKIIEKRLLKWK</sequence>
<name>SYE_MESH2</name>
<evidence type="ECO:0000255" key="1">
    <source>
        <dbReference type="HAMAP-Rule" id="MF_00022"/>
    </source>
</evidence>
<proteinExistence type="inferred from homology"/>
<reference key="1">
    <citation type="journal article" date="2004" name="J. Bacteriol.">
        <title>The genome sequence of Mycoplasma hyopneumoniae strain 232, the agent of swine mycoplasmosis.</title>
        <authorList>
            <person name="Minion F.C."/>
            <person name="Lefkowitz E.J."/>
            <person name="Madsen M.L."/>
            <person name="Cleary B.J."/>
            <person name="Swartzell S.M."/>
            <person name="Mahairas G.G."/>
        </authorList>
    </citation>
    <scope>NUCLEOTIDE SEQUENCE [LARGE SCALE GENOMIC DNA]</scope>
    <source>
        <strain>232</strain>
    </source>
</reference>
<dbReference type="EC" id="6.1.1.17" evidence="1"/>
<dbReference type="EMBL" id="AE017332">
    <property type="protein sequence ID" value="AAV27782.1"/>
    <property type="molecule type" value="Genomic_DNA"/>
</dbReference>
<dbReference type="RefSeq" id="WP_011206078.1">
    <property type="nucleotide sequence ID" value="NC_006360.1"/>
</dbReference>
<dbReference type="SMR" id="Q601G1"/>
<dbReference type="KEGG" id="mhy:mhp241"/>
<dbReference type="eggNOG" id="COG0008">
    <property type="taxonomic scope" value="Bacteria"/>
</dbReference>
<dbReference type="HOGENOM" id="CLU_015768_6_1_14"/>
<dbReference type="PhylomeDB" id="Q601G1"/>
<dbReference type="Proteomes" id="UP000006822">
    <property type="component" value="Chromosome"/>
</dbReference>
<dbReference type="GO" id="GO:0005829">
    <property type="term" value="C:cytosol"/>
    <property type="evidence" value="ECO:0007669"/>
    <property type="project" value="TreeGrafter"/>
</dbReference>
<dbReference type="GO" id="GO:0005524">
    <property type="term" value="F:ATP binding"/>
    <property type="evidence" value="ECO:0007669"/>
    <property type="project" value="UniProtKB-UniRule"/>
</dbReference>
<dbReference type="GO" id="GO:0004818">
    <property type="term" value="F:glutamate-tRNA ligase activity"/>
    <property type="evidence" value="ECO:0007669"/>
    <property type="project" value="UniProtKB-UniRule"/>
</dbReference>
<dbReference type="GO" id="GO:0000049">
    <property type="term" value="F:tRNA binding"/>
    <property type="evidence" value="ECO:0007669"/>
    <property type="project" value="InterPro"/>
</dbReference>
<dbReference type="GO" id="GO:0008270">
    <property type="term" value="F:zinc ion binding"/>
    <property type="evidence" value="ECO:0007669"/>
    <property type="project" value="InterPro"/>
</dbReference>
<dbReference type="GO" id="GO:0006424">
    <property type="term" value="P:glutamyl-tRNA aminoacylation"/>
    <property type="evidence" value="ECO:0007669"/>
    <property type="project" value="UniProtKB-UniRule"/>
</dbReference>
<dbReference type="CDD" id="cd00808">
    <property type="entry name" value="GluRS_core"/>
    <property type="match status" value="1"/>
</dbReference>
<dbReference type="FunFam" id="3.40.50.620:FF:000007">
    <property type="entry name" value="Glutamate--tRNA ligase"/>
    <property type="match status" value="1"/>
</dbReference>
<dbReference type="Gene3D" id="1.10.10.350">
    <property type="match status" value="1"/>
</dbReference>
<dbReference type="Gene3D" id="3.40.50.620">
    <property type="entry name" value="HUPs"/>
    <property type="match status" value="1"/>
</dbReference>
<dbReference type="HAMAP" id="MF_00022">
    <property type="entry name" value="Glu_tRNA_synth_type1"/>
    <property type="match status" value="1"/>
</dbReference>
<dbReference type="InterPro" id="IPR045462">
    <property type="entry name" value="aa-tRNA-synth_I_cd-bd"/>
</dbReference>
<dbReference type="InterPro" id="IPR020751">
    <property type="entry name" value="aa-tRNA-synth_I_codon-bd_sub2"/>
</dbReference>
<dbReference type="InterPro" id="IPR001412">
    <property type="entry name" value="aa-tRNA-synth_I_CS"/>
</dbReference>
<dbReference type="InterPro" id="IPR008925">
    <property type="entry name" value="aa_tRNA-synth_I_cd-bd_sf"/>
</dbReference>
<dbReference type="InterPro" id="IPR004527">
    <property type="entry name" value="Glu-tRNA-ligase_bac/mito"/>
</dbReference>
<dbReference type="InterPro" id="IPR000924">
    <property type="entry name" value="Glu/Gln-tRNA-synth"/>
</dbReference>
<dbReference type="InterPro" id="IPR020058">
    <property type="entry name" value="Glu/Gln-tRNA-synth_Ib_cat-dom"/>
</dbReference>
<dbReference type="InterPro" id="IPR049940">
    <property type="entry name" value="GluQ/Sye"/>
</dbReference>
<dbReference type="InterPro" id="IPR033910">
    <property type="entry name" value="GluRS_core"/>
</dbReference>
<dbReference type="InterPro" id="IPR014729">
    <property type="entry name" value="Rossmann-like_a/b/a_fold"/>
</dbReference>
<dbReference type="NCBIfam" id="TIGR00464">
    <property type="entry name" value="gltX_bact"/>
    <property type="match status" value="1"/>
</dbReference>
<dbReference type="PANTHER" id="PTHR43311">
    <property type="entry name" value="GLUTAMATE--TRNA LIGASE"/>
    <property type="match status" value="1"/>
</dbReference>
<dbReference type="PANTHER" id="PTHR43311:SF2">
    <property type="entry name" value="GLUTAMATE--TRNA LIGASE, MITOCHONDRIAL-RELATED"/>
    <property type="match status" value="1"/>
</dbReference>
<dbReference type="Pfam" id="PF19269">
    <property type="entry name" value="Anticodon_2"/>
    <property type="match status" value="1"/>
</dbReference>
<dbReference type="Pfam" id="PF00749">
    <property type="entry name" value="tRNA-synt_1c"/>
    <property type="match status" value="1"/>
</dbReference>
<dbReference type="PRINTS" id="PR00987">
    <property type="entry name" value="TRNASYNTHGLU"/>
</dbReference>
<dbReference type="SUPFAM" id="SSF48163">
    <property type="entry name" value="An anticodon-binding domain of class I aminoacyl-tRNA synthetases"/>
    <property type="match status" value="1"/>
</dbReference>
<dbReference type="SUPFAM" id="SSF52374">
    <property type="entry name" value="Nucleotidylyl transferase"/>
    <property type="match status" value="1"/>
</dbReference>
<dbReference type="PROSITE" id="PS00178">
    <property type="entry name" value="AA_TRNA_LIGASE_I"/>
    <property type="match status" value="1"/>
</dbReference>
<keyword id="KW-0030">Aminoacyl-tRNA synthetase</keyword>
<keyword id="KW-0067">ATP-binding</keyword>
<keyword id="KW-0963">Cytoplasm</keyword>
<keyword id="KW-0436">Ligase</keyword>
<keyword id="KW-0547">Nucleotide-binding</keyword>
<keyword id="KW-0648">Protein biosynthesis</keyword>
<organism>
    <name type="scientific">Mesomycoplasma hyopneumoniae (strain 232)</name>
    <name type="common">Mycoplasma hyopneumoniae</name>
    <dbReference type="NCBI Taxonomy" id="295358"/>
    <lineage>
        <taxon>Bacteria</taxon>
        <taxon>Bacillati</taxon>
        <taxon>Mycoplasmatota</taxon>
        <taxon>Mycoplasmoidales</taxon>
        <taxon>Metamycoplasmataceae</taxon>
        <taxon>Mesomycoplasma</taxon>
    </lineage>
</organism>
<feature type="chain" id="PRO_0000119602" description="Glutamate--tRNA ligase">
    <location>
        <begin position="1"/>
        <end position="467"/>
    </location>
</feature>
<feature type="short sequence motif" description="'HIGH' region" evidence="1">
    <location>
        <begin position="9"/>
        <end position="19"/>
    </location>
</feature>
<feature type="short sequence motif" description="'KMSKS' region" evidence="1">
    <location>
        <begin position="250"/>
        <end position="254"/>
    </location>
</feature>
<feature type="binding site" evidence="1">
    <location>
        <position position="253"/>
    </location>
    <ligand>
        <name>ATP</name>
        <dbReference type="ChEBI" id="CHEBI:30616"/>
    </ligand>
</feature>
<comment type="function">
    <text evidence="1">Catalyzes the attachment of glutamate to tRNA(Glu) in a two-step reaction: glutamate is first activated by ATP to form Glu-AMP and then transferred to the acceptor end of tRNA(Glu).</text>
</comment>
<comment type="catalytic activity">
    <reaction evidence="1">
        <text>tRNA(Glu) + L-glutamate + ATP = L-glutamyl-tRNA(Glu) + AMP + diphosphate</text>
        <dbReference type="Rhea" id="RHEA:23540"/>
        <dbReference type="Rhea" id="RHEA-COMP:9663"/>
        <dbReference type="Rhea" id="RHEA-COMP:9680"/>
        <dbReference type="ChEBI" id="CHEBI:29985"/>
        <dbReference type="ChEBI" id="CHEBI:30616"/>
        <dbReference type="ChEBI" id="CHEBI:33019"/>
        <dbReference type="ChEBI" id="CHEBI:78442"/>
        <dbReference type="ChEBI" id="CHEBI:78520"/>
        <dbReference type="ChEBI" id="CHEBI:456215"/>
        <dbReference type="EC" id="6.1.1.17"/>
    </reaction>
</comment>
<comment type="subunit">
    <text evidence="1">Monomer.</text>
</comment>
<comment type="subcellular location">
    <subcellularLocation>
        <location evidence="1">Cytoplasm</location>
    </subcellularLocation>
</comment>
<comment type="similarity">
    <text evidence="1">Belongs to the class-I aminoacyl-tRNA synthetase family. Glutamate--tRNA ligase type 1 subfamily.</text>
</comment>
<accession>Q601G1</accession>